<comment type="function">
    <text evidence="1 2 5 6 7">Acts as a signaling pathway regulator involved in innate immune system response (PubMed:26342464, PubMed:29038465, PubMed:29350881). In response to interferon IFN-alpha, associates in a complex with signaling pathway regulator NMI to regulate immune response; the complex formation prevents proteasome-mediated degradation of IFI35 and correlates with IFI35 dephosphorylation (PubMed:10779520, PubMed:10950963). In complex with NMI, inhibits virus-triggered type I interferon/IFN-beta production (PubMed:26342464). In complex with NMI, negatively regulates nuclear factor NF-kappa-B signaling by inhibiting the nuclear translocation, activation and transcription of the NF-kappa-B subunit p65/RELA, resulting in the inhibition of endothelial cell proliferation, migration and re-endothelialization of injured arteries (PubMed:29350881). Beside its role as an intracellular signaling pathway regulator, also functions extracellularly as damage-associated molecular patterns (DAMPs) to promote inflammation when actively released by macrophage to the extracellular space during cell injury and pathogen invasion (PubMed:29038465). Macrophage-secreted IFI35 activates NF-kappa-B signaling in adjacent macrophages through Toll-like receptor 4/TLR4 activation, thereby inducing NF-kappa-B translocation from the cytoplasm into the nucleus which promotes the release of pro-inflammatory cytokines (PubMed:29038465).</text>
</comment>
<comment type="subunit">
    <text evidence="1 2 5 8 10">Homodimer (PubMed:10950963, PubMed:8288566). Also interacts with BATF (PubMed:8954125). Interacts with TRIM21 (PubMed:26342464). Interacts with NMI; the interaction is direct and is facilitated by TRIM21 (PubMed:10779520, PubMed:10950963, PubMed:26342464).</text>
</comment>
<comment type="interaction">
    <interactant intactId="EBI-2115067">
        <id>P80217</id>
    </interactant>
    <interactant intactId="EBI-2114729">
        <id>Q6UXB4</id>
        <label>CLEC4G</label>
    </interactant>
    <organismsDiffer>false</organismsDiffer>
    <experiments>4</experiments>
</comment>
<comment type="interaction">
    <interactant intactId="EBI-12823003">
        <id>P80217-2</id>
    </interactant>
    <interactant intactId="EBI-930964">
        <id>P54253</id>
        <label>ATXN1</label>
    </interactant>
    <organismsDiffer>false</organismsDiffer>
    <experiments>3</experiments>
</comment>
<comment type="interaction">
    <interactant intactId="EBI-12823003">
        <id>P80217-2</id>
    </interactant>
    <interactant intactId="EBI-10988864">
        <id>P46379-2</id>
        <label>BAG6</label>
    </interactant>
    <organismsDiffer>false</organismsDiffer>
    <experiments>3</experiments>
</comment>
<comment type="interaction">
    <interactant intactId="EBI-12823003">
        <id>P80217-2</id>
    </interactant>
    <interactant intactId="EBI-1050106">
        <id>O75934</id>
        <label>BCAS2</label>
    </interactant>
    <organismsDiffer>false</organismsDiffer>
    <experiments>3</experiments>
</comment>
<comment type="interaction">
    <interactant intactId="EBI-12823003">
        <id>P80217-2</id>
    </interactant>
    <interactant intactId="EBI-11974015">
        <id>O43739-2</id>
        <label>CYTH3</label>
    </interactant>
    <organismsDiffer>false</organismsDiffer>
    <experiments>3</experiments>
</comment>
<comment type="interaction">
    <interactant intactId="EBI-12823003">
        <id>P80217-2</id>
    </interactant>
    <interactant intactId="EBI-12593112">
        <id>O75190-2</id>
        <label>DNAJB6</label>
    </interactant>
    <organismsDiffer>false</organismsDiffer>
    <experiments>3</experiments>
</comment>
<comment type="interaction">
    <interactant intactId="EBI-12823003">
        <id>P80217-2</id>
    </interactant>
    <interactant intactId="EBI-395638">
        <id>O14645</id>
        <label>DNALI1</label>
    </interactant>
    <organismsDiffer>false</organismsDiffer>
    <experiments>3</experiments>
</comment>
<comment type="interaction">
    <interactant intactId="EBI-12823003">
        <id>P80217-2</id>
    </interactant>
    <interactant intactId="EBI-12112376">
        <id>A0A0C4DGQ7</id>
        <label>EML2</label>
    </interactant>
    <organismsDiffer>false</organismsDiffer>
    <experiments>3</experiments>
</comment>
<comment type="interaction">
    <interactant intactId="EBI-12823003">
        <id>P80217-2</id>
    </interactant>
    <interactant intactId="EBI-701903">
        <id>Q14192</id>
        <label>FHL2</label>
    </interactant>
    <organismsDiffer>false</organismsDiffer>
    <experiments>5</experiments>
</comment>
<comment type="interaction">
    <interactant intactId="EBI-12823003">
        <id>P80217-2</id>
    </interactant>
    <interactant intactId="EBI-9641086">
        <id>P21333-2</id>
        <label>FLNA</label>
    </interactant>
    <organismsDiffer>false</organismsDiffer>
    <experiments>3</experiments>
</comment>
<comment type="interaction">
    <interactant intactId="EBI-12823003">
        <id>P80217-2</id>
    </interactant>
    <interactant intactId="EBI-948266">
        <id>O14901</id>
        <label>KLF11</label>
    </interactant>
    <organismsDiffer>false</organismsDiffer>
    <experiments>3</experiments>
</comment>
<comment type="interaction">
    <interactant intactId="EBI-12823003">
        <id>P80217-2</id>
    </interactant>
    <interactant intactId="EBI-1050743">
        <id>P31153</id>
        <label>MAT2A</label>
    </interactant>
    <organismsDiffer>false</organismsDiffer>
    <experiments>3</experiments>
</comment>
<comment type="interaction">
    <interactant intactId="EBI-12823003">
        <id>P80217-2</id>
    </interactant>
    <interactant intactId="EBI-372942">
        <id>Q13287</id>
        <label>NMI</label>
    </interactant>
    <organismsDiffer>false</organismsDiffer>
    <experiments>4</experiments>
</comment>
<comment type="interaction">
    <interactant intactId="EBI-12823003">
        <id>P80217-2</id>
    </interactant>
    <interactant intactId="EBI-2811583">
        <id>Q9BVL2</id>
        <label>NUP58</label>
    </interactant>
    <organismsDiffer>false</organismsDiffer>
    <experiments>3</experiments>
</comment>
<comment type="interaction">
    <interactant intactId="EBI-12823003">
        <id>P80217-2</id>
    </interactant>
    <interactant intactId="EBI-473160">
        <id>Q8N2W9</id>
        <label>PIAS4</label>
    </interactant>
    <organismsDiffer>false</organismsDiffer>
    <experiments>3</experiments>
</comment>
<comment type="interaction">
    <interactant intactId="EBI-12823003">
        <id>P80217-2</id>
    </interactant>
    <interactant intactId="EBI-985879">
        <id>P37840</id>
        <label>SNCA</label>
    </interactant>
    <organismsDiffer>false</organismsDiffer>
    <experiments>3</experiments>
</comment>
<comment type="interaction">
    <interactant intactId="EBI-12823003">
        <id>P80217-2</id>
    </interactant>
    <interactant intactId="EBI-990792">
        <id>P00441</id>
        <label>SOD1</label>
    </interactant>
    <organismsDiffer>false</organismsDiffer>
    <experiments>3</experiments>
</comment>
<comment type="interaction">
    <interactant intactId="EBI-12823003">
        <id>P80217-2</id>
    </interactant>
    <interactant intactId="EBI-372899">
        <id>Q13148</id>
        <label>TARDBP</label>
    </interactant>
    <organismsDiffer>false</organismsDiffer>
    <experiments>6</experiments>
</comment>
<comment type="subcellular location">
    <subcellularLocation>
        <location evidence="1 2 8">Cytoplasm</location>
    </subcellularLocation>
    <subcellularLocation>
        <location evidence="2 5 8">Nucleus</location>
    </subcellularLocation>
    <subcellularLocation>
        <location evidence="6">Secreted</location>
    </subcellularLocation>
    <text evidence="2 6 8">Cytoplasmic IFI35 localizes in punctate granular structures (PubMed:10950963). Nuclear localization increased is stimulated by IFN-alpha (PubMed:10950963, PubMed:8288566). Extracelullar following secretion by macrophage (PubMed:29038465).</text>
</comment>
<comment type="alternative products">
    <event type="alternative splicing"/>
    <isoform>
        <id>P80217-1</id>
        <name>1</name>
        <sequence type="displayed"/>
    </isoform>
    <isoform>
        <id>P80217-2</id>
        <name>2</name>
        <sequence type="described" ref="VSP_003569"/>
    </isoform>
</comment>
<comment type="tissue specificity">
    <text evidence="6 8">Expressed in a wide range of cell types, including fibroblasts, macrophages, and epithelial cells.</text>
</comment>
<comment type="induction">
    <text evidence="1 2 8">Up-regulated by interferons IFN-alpha and IFN-gamma.</text>
</comment>
<comment type="domain">
    <text evidence="7">The NID domain 1 is involved in the negative regulation of p65/RELA transcription and the negative regulation of NF-kappa-B pathway activation.</text>
</comment>
<comment type="PTM">
    <text evidence="1">Phosphorylated. Dephosphorylation correlates with the formation of a complex with NMI.</text>
</comment>
<comment type="miscellaneous">
    <molecule>Isoform 2</molecule>
    <text evidence="16">Due to a polymorphism at the 3'-splice acceptor site of intron 4.</text>
</comment>
<comment type="similarity">
    <text evidence="16">Belongs to the NMI family.</text>
</comment>
<comment type="sequence caution" evidence="16">
    <conflict type="miscellaneous discrepancy">
        <sequence resource="EMBL-CDS" id="AAB61703"/>
    </conflict>
    <text>Contaminating sequence. Sequence of unknown origin in the N-terminal part.</text>
</comment>
<feature type="initiator methionine" description="Removed" evidence="3">
    <location>
        <position position="1"/>
    </location>
</feature>
<feature type="chain" id="PRO_0000159704" description="Interferon-induced 35 kDa protein">
    <location>
        <begin position="2"/>
        <end position="286"/>
    </location>
</feature>
<feature type="domain" description="NID 1" evidence="14">
    <location>
        <begin position="81"/>
        <end position="170"/>
    </location>
</feature>
<feature type="domain" description="NID 2" evidence="14">
    <location>
        <begin position="183"/>
        <end position="266"/>
    </location>
</feature>
<feature type="region of interest" description="Leucine-zipper">
    <location>
        <begin position="5"/>
        <end position="26"/>
    </location>
</feature>
<feature type="splice variant" id="VSP_003569" description="In isoform 2." evidence="11 15">
    <original>M</original>
    <variation>VMM</variation>
    <location>
        <position position="126"/>
    </location>
</feature>
<feature type="sequence variant" id="VAR_063758" description="In dbSNP:rs588703." evidence="9">
    <original>M</original>
    <variation>V</variation>
    <location>
        <position position="126"/>
    </location>
</feature>
<feature type="sequence conflict" description="In Ref. 1; no nucleotide entry." evidence="16" ref="1">
    <original>EVEALTVVPQGQQGLAVFTSESG</original>
    <variation>GRGPDSRTPRTAGPSSLHL</variation>
    <location>
        <begin position="264"/>
        <end position="286"/>
    </location>
</feature>
<feature type="sequence variant" id="VAR_082872" description="In dbSNP:rs588703." evidence="4 10">
    <original>M</original>
    <variation>V</variation>
    <location sequence="P80217-2">
        <position position="128"/>
    </location>
</feature>
<accession>P80217</accession>
<accession>C9JGX1</accession>
<accession>Q92984</accession>
<accession>Q99537</accession>
<accession>Q9BV98</accession>
<keyword id="KW-0025">Alternative splicing</keyword>
<keyword id="KW-0963">Cytoplasm</keyword>
<keyword id="KW-0903">Direct protein sequencing</keyword>
<keyword id="KW-0391">Immunity</keyword>
<keyword id="KW-0399">Innate immunity</keyword>
<keyword id="KW-0539">Nucleus</keyword>
<keyword id="KW-0597">Phosphoprotein</keyword>
<keyword id="KW-1267">Proteomics identification</keyword>
<keyword id="KW-1185">Reference proteome</keyword>
<keyword id="KW-0964">Secreted</keyword>
<reference key="1">
    <citation type="journal article" date="1994" name="J. Biol. Chem.">
        <title>IFP 35 is an interferon-induced leucine zipper protein that undergoes interferon-regulated cellular redistribution.</title>
        <authorList>
            <person name="Bange F.-C."/>
            <person name="Vogel U."/>
            <person name="Flohr T."/>
            <person name="Kiekenbeck M."/>
            <person name="Denecke B."/>
            <person name="Boettger E.C."/>
        </authorList>
    </citation>
    <scope>NUCLEOTIDE SEQUENCE (ISOFORM 1)</scope>
    <scope>HOMODIMERIZATION</scope>
    <scope>SUBCELLULAR LOCATION</scope>
    <scope>TISSUE SPECIFICITY</scope>
    <scope>INDUCTION BY IFN-GAMMA</scope>
</reference>
<reference key="2">
    <citation type="journal article" date="1996" name="Biochem. Biophys. Res. Commun.">
        <title>IFP 35 forms complexes with B-ATF, a member of the AP1 family of transcription factors.</title>
        <authorList>
            <person name="Wang X."/>
            <person name="Johansen L.M."/>
            <person name="Tae H.-J."/>
            <person name="Taparowsky E.J."/>
        </authorList>
    </citation>
    <scope>NUCLEOTIDE SEQUENCE [MRNA] (ISOFORM 2)</scope>
    <scope>VARIANT VAL-128 (ISOFORM 2)</scope>
    <scope>INTERACTION WITH BATF</scope>
</reference>
<reference key="3">
    <citation type="journal article" date="2006" name="Nature">
        <title>DNA sequence of human chromosome 17 and analysis of rearrangement in the human lineage.</title>
        <authorList>
            <person name="Zody M.C."/>
            <person name="Garber M."/>
            <person name="Adams D.J."/>
            <person name="Sharpe T."/>
            <person name="Harrow J."/>
            <person name="Lupski J.R."/>
            <person name="Nicholson C."/>
            <person name="Searle S.M."/>
            <person name="Wilming L."/>
            <person name="Young S.K."/>
            <person name="Abouelleil A."/>
            <person name="Allen N.R."/>
            <person name="Bi W."/>
            <person name="Bloom T."/>
            <person name="Borowsky M.L."/>
            <person name="Bugalter B.E."/>
            <person name="Butler J."/>
            <person name="Chang J.L."/>
            <person name="Chen C.-K."/>
            <person name="Cook A."/>
            <person name="Corum B."/>
            <person name="Cuomo C.A."/>
            <person name="de Jong P.J."/>
            <person name="DeCaprio D."/>
            <person name="Dewar K."/>
            <person name="FitzGerald M."/>
            <person name="Gilbert J."/>
            <person name="Gibson R."/>
            <person name="Gnerre S."/>
            <person name="Goldstein S."/>
            <person name="Grafham D.V."/>
            <person name="Grocock R."/>
            <person name="Hafez N."/>
            <person name="Hagopian D.S."/>
            <person name="Hart E."/>
            <person name="Norman C.H."/>
            <person name="Humphray S."/>
            <person name="Jaffe D.B."/>
            <person name="Jones M."/>
            <person name="Kamal M."/>
            <person name="Khodiyar V.K."/>
            <person name="LaButti K."/>
            <person name="Laird G."/>
            <person name="Lehoczky J."/>
            <person name="Liu X."/>
            <person name="Lokyitsang T."/>
            <person name="Loveland J."/>
            <person name="Lui A."/>
            <person name="Macdonald P."/>
            <person name="Major J.E."/>
            <person name="Matthews L."/>
            <person name="Mauceli E."/>
            <person name="McCarroll S.A."/>
            <person name="Mihalev A.H."/>
            <person name="Mudge J."/>
            <person name="Nguyen C."/>
            <person name="Nicol R."/>
            <person name="O'Leary S.B."/>
            <person name="Osoegawa K."/>
            <person name="Schwartz D.C."/>
            <person name="Shaw-Smith C."/>
            <person name="Stankiewicz P."/>
            <person name="Steward C."/>
            <person name="Swarbreck D."/>
            <person name="Venkataraman V."/>
            <person name="Whittaker C.A."/>
            <person name="Yang X."/>
            <person name="Zimmer A.R."/>
            <person name="Bradley A."/>
            <person name="Hubbard T."/>
            <person name="Birren B.W."/>
            <person name="Rogers J."/>
            <person name="Lander E.S."/>
            <person name="Nusbaum C."/>
        </authorList>
    </citation>
    <scope>NUCLEOTIDE SEQUENCE [LARGE SCALE GENOMIC DNA]</scope>
</reference>
<reference key="4">
    <citation type="journal article" date="2004" name="Genome Res.">
        <title>The status, quality, and expansion of the NIH full-length cDNA project: the Mammalian Gene Collection (MGC).</title>
        <authorList>
            <consortium name="The MGC Project Team"/>
        </authorList>
    </citation>
    <scope>NUCLEOTIDE SEQUENCE [LARGE SCALE MRNA] (ISOFORM 2)</scope>
    <scope>VARIANT VAL-128 (ISOFORM 2)</scope>
    <source>
        <tissue>Skin</tissue>
    </source>
</reference>
<reference key="5">
    <citation type="journal article" date="1996" name="Genome Res.">
        <title>Complete genomic sequence and analysis of 117 kb of human DNA containing the gene BRCA1.</title>
        <authorList>
            <person name="Smith T.M."/>
            <person name="Lee M.K."/>
            <person name="Szabo C.I."/>
            <person name="Jerome N."/>
            <person name="McEuen M."/>
            <person name="Taylor M."/>
            <person name="Hood L."/>
            <person name="King M.-C."/>
        </authorList>
    </citation>
    <scope>NUCLEOTIDE SEQUENCE [GENOMIC DNA] OF 41-283 (ISOFORM 1)</scope>
    <scope>VARIANT VAL-126</scope>
</reference>
<reference key="6">
    <citation type="journal article" date="2003" name="Nat. Biotechnol.">
        <title>Exploring proteomes and analyzing protein processing by mass spectrometric identification of sorted N-terminal peptides.</title>
        <authorList>
            <person name="Gevaert K."/>
            <person name="Goethals M."/>
            <person name="Martens L."/>
            <person name="Van Damme J."/>
            <person name="Staes A."/>
            <person name="Thomas G.R."/>
            <person name="Vandekerckhove J."/>
        </authorList>
    </citation>
    <scope>PROTEIN SEQUENCE OF 2-18</scope>
    <source>
        <tissue>Platelet</tissue>
    </source>
</reference>
<reference key="7">
    <citation type="journal article" date="2000" name="J. Biol. Chem.">
        <title>Interferon-alpha induces nmi-IFP35 heterodimeric complex formation that is affected by the phosphorylation of IFP35.</title>
        <authorList>
            <person name="Zhou X."/>
            <person name="Liao J."/>
            <person name="Meyerdierks A."/>
            <person name="Feng L."/>
            <person name="Naumovski L."/>
            <person name="Bottger E.C."/>
            <person name="Omary M.B."/>
        </authorList>
    </citation>
    <scope>FUNCTION</scope>
    <scope>INDUCTION BY IFN-ALPHA</scope>
    <scope>SUBCELLULAR LOCATION</scope>
    <scope>INTERACTION WITH NMI</scope>
    <scope>PHOSPHORYLATION</scope>
</reference>
<reference key="8">
    <citation type="journal article" date="2000" name="J. Biol. Chem.">
        <title>Interferon-inducible Myc/STAT-interacting protein Nmi associates with IFP 35 into a high molecular mass complex and inhibits proteasome-mediated degradation of IFP 35.</title>
        <authorList>
            <person name="Chen J."/>
            <person name="Shpall R.L."/>
            <person name="Meyerdierks A."/>
            <person name="Hagemeier M."/>
            <person name="Boettger E.C."/>
            <person name="Naumovski L."/>
        </authorList>
    </citation>
    <scope>FUNCTION</scope>
    <scope>HOMODIMERIZATION</scope>
    <scope>INTERACTION WITH NMI</scope>
    <scope>INDUCTION BY IFN-ALPHA</scope>
    <scope>SUBCELLULAR LOCATION</scope>
</reference>
<reference key="9">
    <citation type="journal article" date="2011" name="BMC Syst. Biol.">
        <title>Initial characterization of the human central proteome.</title>
        <authorList>
            <person name="Burkard T.R."/>
            <person name="Planyavsky M."/>
            <person name="Kaupe I."/>
            <person name="Breitwieser F.P."/>
            <person name="Buerckstuemmer T."/>
            <person name="Bennett K.L."/>
            <person name="Superti-Furga G."/>
            <person name="Colinge J."/>
        </authorList>
    </citation>
    <scope>IDENTIFICATION BY MASS SPECTROMETRY [LARGE SCALE ANALYSIS]</scope>
</reference>
<reference key="10">
    <citation type="journal article" date="2015" name="Virology">
        <title>Trim21 regulates Nmi-IFI35 complex-mediated inhibition of innate antiviral response.</title>
        <authorList>
            <person name="Das A."/>
            <person name="Dinh P.X."/>
            <person name="Pattnaik A.K."/>
        </authorList>
    </citation>
    <scope>FUNCTION</scope>
    <scope>INTERACTION WITH NMI AND TRIM21</scope>
    <scope>SUBCELLULAR LOCATION</scope>
</reference>
<reference key="11">
    <citation type="journal article" date="2017" name="Nat. Commun.">
        <title>NMI and IFP35 serve as proinflammatory DAMPs during cellular infection and injury.</title>
        <authorList>
            <person name="Xiahou Z."/>
            <person name="Wang X."/>
            <person name="Shen J."/>
            <person name="Zhu X."/>
            <person name="Xu F."/>
            <person name="Hu R."/>
            <person name="Guo D."/>
            <person name="Li H."/>
            <person name="Tian Y."/>
            <person name="Liu Y."/>
            <person name="Liang H."/>
        </authorList>
    </citation>
    <scope>FUNCTION</scope>
    <scope>SUBCELLULAR LOCATION</scope>
    <scope>TISSUE SPECIFICITY</scope>
</reference>
<reference key="12">
    <citation type="journal article" date="2018" name="Acta Physiol.">
        <title>Interferon-induced protein 35 inhibits endothelial cell proliferation, migration and re-endothelialization of injured arteries by inhibiting the nuclear factor-kappa B pathway.</title>
        <authorList>
            <person name="Jian D."/>
            <person name="Wang W."/>
            <person name="Zhou X."/>
            <person name="Jia Z."/>
            <person name="Wang J."/>
            <person name="Yang M."/>
            <person name="Zhao W."/>
            <person name="Jiang Z."/>
            <person name="Hu X."/>
            <person name="Zhu J."/>
        </authorList>
    </citation>
    <scope>FUNCTION</scope>
    <scope>DOMAIN</scope>
</reference>
<dbReference type="EMBL" id="U72882">
    <property type="protein sequence ID" value="AAB61703.1"/>
    <property type="status" value="ALT_SEQ"/>
    <property type="molecule type" value="mRNA"/>
</dbReference>
<dbReference type="EMBL" id="AC055866">
    <property type="status" value="NOT_ANNOTATED_CDS"/>
    <property type="molecule type" value="Genomic_DNA"/>
</dbReference>
<dbReference type="EMBL" id="BC001356">
    <property type="protein sequence ID" value="AAH01356.1"/>
    <property type="molecule type" value="mRNA"/>
</dbReference>
<dbReference type="EMBL" id="L78833">
    <property type="protein sequence ID" value="AAC37597.1"/>
    <property type="molecule type" value="Genomic_DNA"/>
</dbReference>
<dbReference type="CCDS" id="CCDS11450.1">
    <molecule id="P80217-2"/>
</dbReference>
<dbReference type="CCDS" id="CCDS82134.1">
    <molecule id="P80217-1"/>
</dbReference>
<dbReference type="PIR" id="JC5262">
    <property type="entry name" value="JC5262"/>
</dbReference>
<dbReference type="RefSeq" id="NP_001317159.1">
    <molecule id="P80217-1"/>
    <property type="nucleotide sequence ID" value="NM_001330230.2"/>
</dbReference>
<dbReference type="RefSeq" id="NP_005524.2">
    <molecule id="P80217-2"/>
    <property type="nucleotide sequence ID" value="NM_005533.5"/>
</dbReference>
<dbReference type="BioGRID" id="109656">
    <property type="interactions" value="38"/>
</dbReference>
<dbReference type="CORUM" id="P80217"/>
<dbReference type="FunCoup" id="P80217">
    <property type="interactions" value="874"/>
</dbReference>
<dbReference type="IntAct" id="P80217">
    <property type="interactions" value="33"/>
</dbReference>
<dbReference type="MINT" id="P80217"/>
<dbReference type="STRING" id="9606.ENSP00000395590"/>
<dbReference type="GlyGen" id="P80217">
    <property type="glycosylation" value="1 site, 1 O-linked glycan (1 site)"/>
</dbReference>
<dbReference type="iPTMnet" id="P80217"/>
<dbReference type="PhosphoSitePlus" id="P80217"/>
<dbReference type="BioMuta" id="IFI35"/>
<dbReference type="DMDM" id="311033494"/>
<dbReference type="jPOST" id="P80217"/>
<dbReference type="MassIVE" id="P80217"/>
<dbReference type="PaxDb" id="9606-ENSP00000395590"/>
<dbReference type="PeptideAtlas" id="P80217"/>
<dbReference type="ProteomicsDB" id="57673">
    <molecule id="P80217-1"/>
</dbReference>
<dbReference type="ProteomicsDB" id="57674">
    <molecule id="P80217-2"/>
</dbReference>
<dbReference type="Pumba" id="P80217"/>
<dbReference type="Antibodypedia" id="29492">
    <property type="antibodies" value="348 antibodies from 25 providers"/>
</dbReference>
<dbReference type="DNASU" id="3430"/>
<dbReference type="Ensembl" id="ENST00000415816.7">
    <molecule id="P80217-1"/>
    <property type="protein sequence ID" value="ENSP00000394579.3"/>
    <property type="gene ID" value="ENSG00000068079.8"/>
</dbReference>
<dbReference type="Ensembl" id="ENST00000438323.2">
    <molecule id="P80217-2"/>
    <property type="protein sequence ID" value="ENSP00000395590.2"/>
    <property type="gene ID" value="ENSG00000068079.8"/>
</dbReference>
<dbReference type="GeneID" id="3430"/>
<dbReference type="KEGG" id="hsa:3430"/>
<dbReference type="MANE-Select" id="ENST00000415816.7">
    <property type="protein sequence ID" value="ENSP00000394579.3"/>
    <property type="RefSeq nucleotide sequence ID" value="NM_001330230.2"/>
    <property type="RefSeq protein sequence ID" value="NP_001317159.1"/>
</dbReference>
<dbReference type="UCSC" id="uc021txx.2">
    <molecule id="P80217-1"/>
    <property type="organism name" value="human"/>
</dbReference>
<dbReference type="AGR" id="HGNC:5399"/>
<dbReference type="CTD" id="3430"/>
<dbReference type="DisGeNET" id="3430"/>
<dbReference type="GeneCards" id="IFI35"/>
<dbReference type="HGNC" id="HGNC:5399">
    <property type="gene designation" value="IFI35"/>
</dbReference>
<dbReference type="HPA" id="ENSG00000068079">
    <property type="expression patterns" value="Low tissue specificity"/>
</dbReference>
<dbReference type="MIM" id="600735">
    <property type="type" value="gene"/>
</dbReference>
<dbReference type="neXtProt" id="NX_P80217"/>
<dbReference type="OpenTargets" id="ENSG00000068079"/>
<dbReference type="PharmGKB" id="PA29645"/>
<dbReference type="VEuPathDB" id="HostDB:ENSG00000068079"/>
<dbReference type="eggNOG" id="ENOG502QUNN">
    <property type="taxonomic scope" value="Eukaryota"/>
</dbReference>
<dbReference type="GeneTree" id="ENSGT00530000063686"/>
<dbReference type="HOGENOM" id="CLU_047262_1_1_1"/>
<dbReference type="InParanoid" id="P80217"/>
<dbReference type="OMA" id="HKIDMEE"/>
<dbReference type="OrthoDB" id="9936051at2759"/>
<dbReference type="PAN-GO" id="P80217">
    <property type="GO annotations" value="1 GO annotation based on evolutionary models"/>
</dbReference>
<dbReference type="PhylomeDB" id="P80217"/>
<dbReference type="TreeFam" id="TF332752"/>
<dbReference type="PathwayCommons" id="P80217"/>
<dbReference type="Reactome" id="R-HSA-909733">
    <property type="pathway name" value="Interferon alpha/beta signaling"/>
</dbReference>
<dbReference type="SignaLink" id="P80217"/>
<dbReference type="BioGRID-ORCS" id="3430">
    <property type="hits" value="20 hits in 1170 CRISPR screens"/>
</dbReference>
<dbReference type="ChiTaRS" id="IFI35">
    <property type="organism name" value="human"/>
</dbReference>
<dbReference type="GeneWiki" id="IFI35"/>
<dbReference type="GenomeRNAi" id="3430"/>
<dbReference type="Pharos" id="P80217">
    <property type="development level" value="Tbio"/>
</dbReference>
<dbReference type="PRO" id="PR:P80217"/>
<dbReference type="Proteomes" id="UP000005640">
    <property type="component" value="Chromosome 17"/>
</dbReference>
<dbReference type="RNAct" id="P80217">
    <property type="molecule type" value="protein"/>
</dbReference>
<dbReference type="Bgee" id="ENSG00000068079">
    <property type="expression patterns" value="Expressed in granulocyte and 157 other cell types or tissues"/>
</dbReference>
<dbReference type="GO" id="GO:0005737">
    <property type="term" value="C:cytoplasm"/>
    <property type="evidence" value="ECO:0000314"/>
    <property type="project" value="UniProtKB"/>
</dbReference>
<dbReference type="GO" id="GO:0005829">
    <property type="term" value="C:cytosol"/>
    <property type="evidence" value="ECO:0000314"/>
    <property type="project" value="HPA"/>
</dbReference>
<dbReference type="GO" id="GO:0005615">
    <property type="term" value="C:extracellular space"/>
    <property type="evidence" value="ECO:0000314"/>
    <property type="project" value="UniProtKB"/>
</dbReference>
<dbReference type="GO" id="GO:0016020">
    <property type="term" value="C:membrane"/>
    <property type="evidence" value="ECO:0000314"/>
    <property type="project" value="UniProtKB"/>
</dbReference>
<dbReference type="GO" id="GO:0005730">
    <property type="term" value="C:nucleolus"/>
    <property type="evidence" value="ECO:0000314"/>
    <property type="project" value="HPA"/>
</dbReference>
<dbReference type="GO" id="GO:0005654">
    <property type="term" value="C:nucleoplasm"/>
    <property type="evidence" value="ECO:0000314"/>
    <property type="project" value="HPA"/>
</dbReference>
<dbReference type="GO" id="GO:0005634">
    <property type="term" value="C:nucleus"/>
    <property type="evidence" value="ECO:0000314"/>
    <property type="project" value="UniProtKB"/>
</dbReference>
<dbReference type="GO" id="GO:0042802">
    <property type="term" value="F:identical protein binding"/>
    <property type="evidence" value="ECO:0000314"/>
    <property type="project" value="UniProtKB"/>
</dbReference>
<dbReference type="GO" id="GO:0045087">
    <property type="term" value="P:innate immune response"/>
    <property type="evidence" value="ECO:0007669"/>
    <property type="project" value="UniProtKB-KW"/>
</dbReference>
<dbReference type="GO" id="GO:0002281">
    <property type="term" value="P:macrophage activation involved in immune response"/>
    <property type="evidence" value="ECO:0000314"/>
    <property type="project" value="UniProtKB"/>
</dbReference>
<dbReference type="GO" id="GO:0008285">
    <property type="term" value="P:negative regulation of cell population proliferation"/>
    <property type="evidence" value="ECO:0000315"/>
    <property type="project" value="UniProtKB"/>
</dbReference>
<dbReference type="GO" id="GO:1901223">
    <property type="term" value="P:negative regulation of non-canonical NF-kappaB signal transduction"/>
    <property type="evidence" value="ECO:0000315"/>
    <property type="project" value="UniProtKB"/>
</dbReference>
<dbReference type="GO" id="GO:0050729">
    <property type="term" value="P:positive regulation of inflammatory response"/>
    <property type="evidence" value="ECO:0000314"/>
    <property type="project" value="UniProtKB"/>
</dbReference>
<dbReference type="GO" id="GO:0045089">
    <property type="term" value="P:positive regulation of innate immune response"/>
    <property type="evidence" value="ECO:0000314"/>
    <property type="project" value="UniProtKB"/>
</dbReference>
<dbReference type="GO" id="GO:1901224">
    <property type="term" value="P:positive regulation of non-canonical NF-kappaB signal transduction"/>
    <property type="evidence" value="ECO:0000250"/>
    <property type="project" value="UniProtKB"/>
</dbReference>
<dbReference type="GO" id="GO:0034145">
    <property type="term" value="P:positive regulation of toll-like receptor 4 signaling pathway"/>
    <property type="evidence" value="ECO:0000314"/>
    <property type="project" value="UniProtKB"/>
</dbReference>
<dbReference type="FunFam" id="3.30.70.330:FF:000620">
    <property type="entry name" value="Interferon induced protein 35"/>
    <property type="match status" value="1"/>
</dbReference>
<dbReference type="FunFam" id="3.30.70.330:FF:000300">
    <property type="entry name" value="Interferon-induced protein 35"/>
    <property type="match status" value="1"/>
</dbReference>
<dbReference type="Gene3D" id="3.30.70.330">
    <property type="match status" value="2"/>
</dbReference>
<dbReference type="InterPro" id="IPR009909">
    <property type="entry name" value="Nmi/IFP35_dom"/>
</dbReference>
<dbReference type="InterPro" id="IPR009938">
    <property type="entry name" value="Nmi/IFP35_N"/>
</dbReference>
<dbReference type="InterPro" id="IPR012677">
    <property type="entry name" value="Nucleotide-bd_a/b_plait_sf"/>
</dbReference>
<dbReference type="PANTHER" id="PTHR15225:SF1">
    <property type="entry name" value="INTERFERON-INDUCED 35 KDA PROTEIN"/>
    <property type="match status" value="1"/>
</dbReference>
<dbReference type="PANTHER" id="PTHR15225">
    <property type="entry name" value="INTERFERON-INDUCED PROTEIN 35/NMI N-MYC/STAT INTERACTING PROTEIN"/>
    <property type="match status" value="1"/>
</dbReference>
<dbReference type="Pfam" id="PF07334">
    <property type="entry name" value="IFP_35_N"/>
    <property type="match status" value="1"/>
</dbReference>
<dbReference type="Pfam" id="PF07292">
    <property type="entry name" value="NID"/>
    <property type="match status" value="2"/>
</dbReference>
<protein>
    <recommendedName>
        <fullName evidence="15">Interferon-induced 35 kDa protein</fullName>
        <shortName evidence="13 15">IFP 35</shortName>
        <shortName evidence="12 14">Ifi-35</shortName>
    </recommendedName>
</protein>
<proteinExistence type="evidence at protein level"/>
<gene>
    <name evidence="17" type="primary">IFI35</name>
    <name evidence="13" type="synonym">IFP35</name>
</gene>
<sequence length="286" mass="31546">MSAPLDAALHALQEEQARLKMRLWDLQQLRKELGDSPKDKVPFSVPKIPLVFRGHTQQDPEVPKSLVSNLRIHCPLLAGSALITFDDPKVAEQVLQQKEHTINMEECRLRVQVQPLELPMVTTIQMSSQLSGRRVLVTGFPASLRLSEEELLDKLEIFFGKTRNGGGDVDVRELLPGSVMLGFARDGVAQRLCQIGQFTVPLGGQQVPLRVSPYVNGEIQKAEIRSQPVPRSVLVLNIPDILDGPELHDVLEIHFQKPTRGGGEVEALTVVPQGQQGLAVFTSESG</sequence>
<name>IN35_HUMAN</name>
<evidence type="ECO:0000269" key="1">
    <source>
    </source>
</evidence>
<evidence type="ECO:0000269" key="2">
    <source>
    </source>
</evidence>
<evidence type="ECO:0000269" key="3">
    <source>
    </source>
</evidence>
<evidence type="ECO:0000269" key="4">
    <source>
    </source>
</evidence>
<evidence type="ECO:0000269" key="5">
    <source>
    </source>
</evidence>
<evidence type="ECO:0000269" key="6">
    <source>
    </source>
</evidence>
<evidence type="ECO:0000269" key="7">
    <source>
    </source>
</evidence>
<evidence type="ECO:0000269" key="8">
    <source>
    </source>
</evidence>
<evidence type="ECO:0000269" key="9">
    <source>
    </source>
</evidence>
<evidence type="ECO:0000269" key="10">
    <source>
    </source>
</evidence>
<evidence type="ECO:0000303" key="11">
    <source>
    </source>
</evidence>
<evidence type="ECO:0000303" key="12">
    <source>
    </source>
</evidence>
<evidence type="ECO:0000303" key="13">
    <source>
    </source>
</evidence>
<evidence type="ECO:0000303" key="14">
    <source>
    </source>
</evidence>
<evidence type="ECO:0000303" key="15">
    <source>
    </source>
</evidence>
<evidence type="ECO:0000305" key="16"/>
<evidence type="ECO:0000312" key="17">
    <source>
        <dbReference type="HGNC" id="HGNC:5399"/>
    </source>
</evidence>
<organism>
    <name type="scientific">Homo sapiens</name>
    <name type="common">Human</name>
    <dbReference type="NCBI Taxonomy" id="9606"/>
    <lineage>
        <taxon>Eukaryota</taxon>
        <taxon>Metazoa</taxon>
        <taxon>Chordata</taxon>
        <taxon>Craniata</taxon>
        <taxon>Vertebrata</taxon>
        <taxon>Euteleostomi</taxon>
        <taxon>Mammalia</taxon>
        <taxon>Eutheria</taxon>
        <taxon>Euarchontoglires</taxon>
        <taxon>Primates</taxon>
        <taxon>Haplorrhini</taxon>
        <taxon>Catarrhini</taxon>
        <taxon>Hominidae</taxon>
        <taxon>Homo</taxon>
    </lineage>
</organism>